<proteinExistence type="inferred from homology"/>
<accession>Q4J8X6</accession>
<protein>
    <recommendedName>
        <fullName evidence="1">N-(5'-phosphoribosyl)anthranilate isomerase</fullName>
        <shortName evidence="1">PRAI</shortName>
        <ecNumber evidence="1">5.3.1.24</ecNumber>
    </recommendedName>
</protein>
<evidence type="ECO:0000255" key="1">
    <source>
        <dbReference type="HAMAP-Rule" id="MF_00135"/>
    </source>
</evidence>
<feature type="chain" id="PRO_0000154414" description="N-(5'-phosphoribosyl)anthranilate isomerase">
    <location>
        <begin position="1"/>
        <end position="199"/>
    </location>
</feature>
<name>TRPF_SULAC</name>
<comment type="catalytic activity">
    <reaction evidence="1">
        <text>N-(5-phospho-beta-D-ribosyl)anthranilate = 1-(2-carboxyphenylamino)-1-deoxy-D-ribulose 5-phosphate</text>
        <dbReference type="Rhea" id="RHEA:21540"/>
        <dbReference type="ChEBI" id="CHEBI:18277"/>
        <dbReference type="ChEBI" id="CHEBI:58613"/>
        <dbReference type="EC" id="5.3.1.24"/>
    </reaction>
</comment>
<comment type="pathway">
    <text evidence="1">Amino-acid biosynthesis; L-tryptophan biosynthesis; L-tryptophan from chorismate: step 3/5.</text>
</comment>
<comment type="similarity">
    <text evidence="1">Belongs to the TrpF family.</text>
</comment>
<gene>
    <name evidence="1" type="primary">trpF</name>
    <name type="ordered locus">Saci_1424</name>
</gene>
<dbReference type="EC" id="5.3.1.24" evidence="1"/>
<dbReference type="EMBL" id="CP000077">
    <property type="protein sequence ID" value="AAY80754.1"/>
    <property type="molecule type" value="Genomic_DNA"/>
</dbReference>
<dbReference type="RefSeq" id="WP_011278256.1">
    <property type="nucleotide sequence ID" value="NC_007181.1"/>
</dbReference>
<dbReference type="SMR" id="Q4J8X6"/>
<dbReference type="STRING" id="330779.Saci_1424"/>
<dbReference type="GeneID" id="14551924"/>
<dbReference type="KEGG" id="sai:Saci_1424"/>
<dbReference type="PATRIC" id="fig|330779.12.peg.1372"/>
<dbReference type="eggNOG" id="arCOG01983">
    <property type="taxonomic scope" value="Archaea"/>
</dbReference>
<dbReference type="HOGENOM" id="CLU_076364_3_0_2"/>
<dbReference type="UniPathway" id="UPA00035">
    <property type="reaction ID" value="UER00042"/>
</dbReference>
<dbReference type="Proteomes" id="UP000001018">
    <property type="component" value="Chromosome"/>
</dbReference>
<dbReference type="GO" id="GO:0004640">
    <property type="term" value="F:phosphoribosylanthranilate isomerase activity"/>
    <property type="evidence" value="ECO:0007669"/>
    <property type="project" value="UniProtKB-UniRule"/>
</dbReference>
<dbReference type="GO" id="GO:0000162">
    <property type="term" value="P:L-tryptophan biosynthetic process"/>
    <property type="evidence" value="ECO:0007669"/>
    <property type="project" value="UniProtKB-UniRule"/>
</dbReference>
<dbReference type="CDD" id="cd00405">
    <property type="entry name" value="PRAI"/>
    <property type="match status" value="1"/>
</dbReference>
<dbReference type="Gene3D" id="3.20.20.70">
    <property type="entry name" value="Aldolase class I"/>
    <property type="match status" value="1"/>
</dbReference>
<dbReference type="HAMAP" id="MF_00135">
    <property type="entry name" value="PRAI"/>
    <property type="match status" value="1"/>
</dbReference>
<dbReference type="InterPro" id="IPR013785">
    <property type="entry name" value="Aldolase_TIM"/>
</dbReference>
<dbReference type="InterPro" id="IPR001240">
    <property type="entry name" value="PRAI_dom"/>
</dbReference>
<dbReference type="InterPro" id="IPR011060">
    <property type="entry name" value="RibuloseP-bd_barrel"/>
</dbReference>
<dbReference type="InterPro" id="IPR044643">
    <property type="entry name" value="TrpF_fam"/>
</dbReference>
<dbReference type="PANTHER" id="PTHR42894">
    <property type="entry name" value="N-(5'-PHOSPHORIBOSYL)ANTHRANILATE ISOMERASE"/>
    <property type="match status" value="1"/>
</dbReference>
<dbReference type="PANTHER" id="PTHR42894:SF1">
    <property type="entry name" value="N-(5'-PHOSPHORIBOSYL)ANTHRANILATE ISOMERASE"/>
    <property type="match status" value="1"/>
</dbReference>
<dbReference type="Pfam" id="PF00697">
    <property type="entry name" value="PRAI"/>
    <property type="match status" value="1"/>
</dbReference>
<dbReference type="SUPFAM" id="SSF51366">
    <property type="entry name" value="Ribulose-phoshate binding barrel"/>
    <property type="match status" value="1"/>
</dbReference>
<reference key="1">
    <citation type="journal article" date="2005" name="J. Bacteriol.">
        <title>The genome of Sulfolobus acidocaldarius, a model organism of the Crenarchaeota.</title>
        <authorList>
            <person name="Chen L."/>
            <person name="Bruegger K."/>
            <person name="Skovgaard M."/>
            <person name="Redder P."/>
            <person name="She Q."/>
            <person name="Torarinsson E."/>
            <person name="Greve B."/>
            <person name="Awayez M."/>
            <person name="Zibat A."/>
            <person name="Klenk H.-P."/>
            <person name="Garrett R.A."/>
        </authorList>
    </citation>
    <scope>NUCLEOTIDE SEQUENCE [LARGE SCALE GENOMIC DNA]</scope>
    <source>
        <strain>ATCC 33909 / DSM 639 / JCM 8929 / NBRC 15157 / NCIMB 11770</strain>
    </source>
</reference>
<keyword id="KW-0028">Amino-acid biosynthesis</keyword>
<keyword id="KW-0057">Aromatic amino acid biosynthesis</keyword>
<keyword id="KW-0413">Isomerase</keyword>
<keyword id="KW-1185">Reference proteome</keyword>
<keyword id="KW-0822">Tryptophan biosynthesis</keyword>
<sequence>MVKVKFCGIASLEDAILAEKLGADFIGFVTDTASPRFVKKDFIGFVRRYVEIPTVEVIVKGNVSESIDKTKADLIQIHRVLTRRELDEIHMYRKKVILYVPSSDMYQEYFRSVISMGFNVLVDSEIKGSKVNLDLARGWAKEYEIGIGGGISPDNLHDFLSINPKWIDVSSGIEKYKGKKDPSKMLKIIEGVRKWKYTQ</sequence>
<organism>
    <name type="scientific">Sulfolobus acidocaldarius (strain ATCC 33909 / DSM 639 / JCM 8929 / NBRC 15157 / NCIMB 11770)</name>
    <dbReference type="NCBI Taxonomy" id="330779"/>
    <lineage>
        <taxon>Archaea</taxon>
        <taxon>Thermoproteota</taxon>
        <taxon>Thermoprotei</taxon>
        <taxon>Sulfolobales</taxon>
        <taxon>Sulfolobaceae</taxon>
        <taxon>Sulfolobus</taxon>
    </lineage>
</organism>